<protein>
    <recommendedName>
        <fullName evidence="1">GMP synthase [glutamine-hydrolyzing]</fullName>
        <ecNumber evidence="1">6.3.5.2</ecNumber>
    </recommendedName>
    <alternativeName>
        <fullName evidence="1">GMP synthetase</fullName>
    </alternativeName>
    <alternativeName>
        <fullName evidence="1">Glutamine amidotransferase</fullName>
    </alternativeName>
</protein>
<feature type="chain" id="PRO_1000120428" description="GMP synthase [glutamine-hydrolyzing]">
    <location>
        <begin position="1"/>
        <end position="520"/>
    </location>
</feature>
<feature type="domain" description="Glutamine amidotransferase type-1" evidence="1">
    <location>
        <begin position="13"/>
        <end position="205"/>
    </location>
</feature>
<feature type="domain" description="GMPS ATP-PPase" evidence="1">
    <location>
        <begin position="206"/>
        <end position="395"/>
    </location>
</feature>
<feature type="active site" description="Nucleophile" evidence="1">
    <location>
        <position position="90"/>
    </location>
</feature>
<feature type="active site" evidence="1">
    <location>
        <position position="179"/>
    </location>
</feature>
<feature type="active site" evidence="1">
    <location>
        <position position="181"/>
    </location>
</feature>
<feature type="binding site" evidence="1">
    <location>
        <begin position="233"/>
        <end position="239"/>
    </location>
    <ligand>
        <name>ATP</name>
        <dbReference type="ChEBI" id="CHEBI:30616"/>
    </ligand>
</feature>
<evidence type="ECO:0000255" key="1">
    <source>
        <dbReference type="HAMAP-Rule" id="MF_00344"/>
    </source>
</evidence>
<reference key="1">
    <citation type="journal article" date="2007" name="J. Bacteriol.">
        <title>Genome sequence of Avery's virulent serotype 2 strain D39 of Streptococcus pneumoniae and comparison with that of unencapsulated laboratory strain R6.</title>
        <authorList>
            <person name="Lanie J.A."/>
            <person name="Ng W.-L."/>
            <person name="Kazmierczak K.M."/>
            <person name="Andrzejewski T.M."/>
            <person name="Davidsen T.M."/>
            <person name="Wayne K.J."/>
            <person name="Tettelin H."/>
            <person name="Glass J.I."/>
            <person name="Winkler M.E."/>
        </authorList>
    </citation>
    <scope>NUCLEOTIDE SEQUENCE [LARGE SCALE GENOMIC DNA]</scope>
    <source>
        <strain>D39 / NCTC 7466</strain>
    </source>
</reference>
<dbReference type="EC" id="6.3.5.2" evidence="1"/>
<dbReference type="EMBL" id="CP000410">
    <property type="protein sequence ID" value="ABJ54770.1"/>
    <property type="molecule type" value="Genomic_DNA"/>
</dbReference>
<dbReference type="RefSeq" id="WP_000065723.1">
    <property type="nucleotide sequence ID" value="NZ_JAMLJR010000005.1"/>
</dbReference>
<dbReference type="SMR" id="Q04JQ8"/>
<dbReference type="PaxDb" id="373153-SPD_1274"/>
<dbReference type="GeneID" id="45653302"/>
<dbReference type="KEGG" id="spd:SPD_1274"/>
<dbReference type="eggNOG" id="COG0518">
    <property type="taxonomic scope" value="Bacteria"/>
</dbReference>
<dbReference type="eggNOG" id="COG0519">
    <property type="taxonomic scope" value="Bacteria"/>
</dbReference>
<dbReference type="HOGENOM" id="CLU_014340_0_5_9"/>
<dbReference type="BioCyc" id="SPNE373153:G1G6V-1377-MONOMER"/>
<dbReference type="UniPathway" id="UPA00189">
    <property type="reaction ID" value="UER00296"/>
</dbReference>
<dbReference type="Proteomes" id="UP000001452">
    <property type="component" value="Chromosome"/>
</dbReference>
<dbReference type="GO" id="GO:0005829">
    <property type="term" value="C:cytosol"/>
    <property type="evidence" value="ECO:0007669"/>
    <property type="project" value="TreeGrafter"/>
</dbReference>
<dbReference type="GO" id="GO:0005524">
    <property type="term" value="F:ATP binding"/>
    <property type="evidence" value="ECO:0007669"/>
    <property type="project" value="UniProtKB-UniRule"/>
</dbReference>
<dbReference type="GO" id="GO:0003921">
    <property type="term" value="F:GMP synthase activity"/>
    <property type="evidence" value="ECO:0007669"/>
    <property type="project" value="InterPro"/>
</dbReference>
<dbReference type="CDD" id="cd01742">
    <property type="entry name" value="GATase1_GMP_Synthase"/>
    <property type="match status" value="1"/>
</dbReference>
<dbReference type="CDD" id="cd01997">
    <property type="entry name" value="GMP_synthase_C"/>
    <property type="match status" value="1"/>
</dbReference>
<dbReference type="FunFam" id="3.30.300.10:FF:000002">
    <property type="entry name" value="GMP synthase [glutamine-hydrolyzing]"/>
    <property type="match status" value="1"/>
</dbReference>
<dbReference type="FunFam" id="3.40.50.620:FF:000001">
    <property type="entry name" value="GMP synthase [glutamine-hydrolyzing]"/>
    <property type="match status" value="1"/>
</dbReference>
<dbReference type="FunFam" id="3.40.50.880:FF:000001">
    <property type="entry name" value="GMP synthase [glutamine-hydrolyzing]"/>
    <property type="match status" value="1"/>
</dbReference>
<dbReference type="Gene3D" id="3.30.300.10">
    <property type="match status" value="1"/>
</dbReference>
<dbReference type="Gene3D" id="3.40.50.880">
    <property type="match status" value="1"/>
</dbReference>
<dbReference type="Gene3D" id="3.40.50.620">
    <property type="entry name" value="HUPs"/>
    <property type="match status" value="1"/>
</dbReference>
<dbReference type="HAMAP" id="MF_00344">
    <property type="entry name" value="GMP_synthase"/>
    <property type="match status" value="1"/>
</dbReference>
<dbReference type="InterPro" id="IPR029062">
    <property type="entry name" value="Class_I_gatase-like"/>
</dbReference>
<dbReference type="InterPro" id="IPR017926">
    <property type="entry name" value="GATASE"/>
</dbReference>
<dbReference type="InterPro" id="IPR001674">
    <property type="entry name" value="GMP_synth_C"/>
</dbReference>
<dbReference type="InterPro" id="IPR004739">
    <property type="entry name" value="GMP_synth_GATase"/>
</dbReference>
<dbReference type="InterPro" id="IPR022955">
    <property type="entry name" value="GMP_synthase"/>
</dbReference>
<dbReference type="InterPro" id="IPR025777">
    <property type="entry name" value="GMPS_ATP_PPase_dom"/>
</dbReference>
<dbReference type="InterPro" id="IPR022310">
    <property type="entry name" value="NAD/GMP_synthase"/>
</dbReference>
<dbReference type="InterPro" id="IPR014729">
    <property type="entry name" value="Rossmann-like_a/b/a_fold"/>
</dbReference>
<dbReference type="NCBIfam" id="TIGR00884">
    <property type="entry name" value="guaA_Cterm"/>
    <property type="match status" value="1"/>
</dbReference>
<dbReference type="NCBIfam" id="TIGR00888">
    <property type="entry name" value="guaA_Nterm"/>
    <property type="match status" value="1"/>
</dbReference>
<dbReference type="NCBIfam" id="NF000848">
    <property type="entry name" value="PRK00074.1"/>
    <property type="match status" value="1"/>
</dbReference>
<dbReference type="PANTHER" id="PTHR11922:SF2">
    <property type="entry name" value="GMP SYNTHASE [GLUTAMINE-HYDROLYZING]"/>
    <property type="match status" value="1"/>
</dbReference>
<dbReference type="PANTHER" id="PTHR11922">
    <property type="entry name" value="GMP SYNTHASE-RELATED"/>
    <property type="match status" value="1"/>
</dbReference>
<dbReference type="Pfam" id="PF00117">
    <property type="entry name" value="GATase"/>
    <property type="match status" value="1"/>
</dbReference>
<dbReference type="Pfam" id="PF00958">
    <property type="entry name" value="GMP_synt_C"/>
    <property type="match status" value="1"/>
</dbReference>
<dbReference type="Pfam" id="PF02540">
    <property type="entry name" value="NAD_synthase"/>
    <property type="match status" value="1"/>
</dbReference>
<dbReference type="PRINTS" id="PR00097">
    <property type="entry name" value="ANTSNTHASEII"/>
</dbReference>
<dbReference type="PRINTS" id="PR00099">
    <property type="entry name" value="CPSGATASE"/>
</dbReference>
<dbReference type="PRINTS" id="PR00096">
    <property type="entry name" value="GATASE"/>
</dbReference>
<dbReference type="SUPFAM" id="SSF52402">
    <property type="entry name" value="Adenine nucleotide alpha hydrolases-like"/>
    <property type="match status" value="1"/>
</dbReference>
<dbReference type="SUPFAM" id="SSF52317">
    <property type="entry name" value="Class I glutamine amidotransferase-like"/>
    <property type="match status" value="1"/>
</dbReference>
<dbReference type="PROSITE" id="PS51273">
    <property type="entry name" value="GATASE_TYPE_1"/>
    <property type="match status" value="1"/>
</dbReference>
<dbReference type="PROSITE" id="PS51553">
    <property type="entry name" value="GMPS_ATP_PPASE"/>
    <property type="match status" value="1"/>
</dbReference>
<keyword id="KW-0067">ATP-binding</keyword>
<keyword id="KW-0315">Glutamine amidotransferase</keyword>
<keyword id="KW-0332">GMP biosynthesis</keyword>
<keyword id="KW-0436">Ligase</keyword>
<keyword id="KW-0547">Nucleotide-binding</keyword>
<keyword id="KW-0658">Purine biosynthesis</keyword>
<keyword id="KW-1185">Reference proteome</keyword>
<proteinExistence type="inferred from homology"/>
<gene>
    <name evidence="1" type="primary">guaA</name>
    <name type="ordered locus">SPD_1274</name>
</gene>
<sequence length="520" mass="57472">MSNISTDLQDVEKIIVLDYGSQYNQLISRRIREIGVFSELKSHKISAAEVREVNPVGIILSGGPNSVYEDGSFDIDPEIFELGIPILGICYGMQLLTHKLGGKVVPAGDAGNREYGQSTLTHTPSALFESTPDEQTVLMSHGDAVTEIPADFVRTGTSADCPYAAIENPDKHIYGIQFHPEVRHSVYGNDILRNFALNICKAKGDWSMDNFIDMQIKKIRETVGDKRVLLGLSGGVDSSVVGVLLQKAIGDQLICIFVDHGLLRKGEADQVMDMLGGKFGLNIVKADAAKRFLDKLAGVSDPEQKRKIIGNEFVYVFDDEASKLKDVKFLAQGTLYTDVIESGTDTAQTIKSHHNVGGLPEDMQFELIEPLNTLYKDEVRALGTELGMPDHIVWRQPFPGPGLAIRVMGEITEEKLETVRESDAILREEIAKAGLDRDIWQYFTVNTGVRSVGVMGDGRTYDYTIAIRAITSIDGMTADFAKIPWEVLQKISVRIVNEVDHVNRIVYDITSKPPATVEWE</sequence>
<organism>
    <name type="scientific">Streptococcus pneumoniae serotype 2 (strain D39 / NCTC 7466)</name>
    <dbReference type="NCBI Taxonomy" id="373153"/>
    <lineage>
        <taxon>Bacteria</taxon>
        <taxon>Bacillati</taxon>
        <taxon>Bacillota</taxon>
        <taxon>Bacilli</taxon>
        <taxon>Lactobacillales</taxon>
        <taxon>Streptococcaceae</taxon>
        <taxon>Streptococcus</taxon>
    </lineage>
</organism>
<comment type="function">
    <text evidence="1">Catalyzes the synthesis of GMP from XMP.</text>
</comment>
<comment type="catalytic activity">
    <reaction evidence="1">
        <text>XMP + L-glutamine + ATP + H2O = GMP + L-glutamate + AMP + diphosphate + 2 H(+)</text>
        <dbReference type="Rhea" id="RHEA:11680"/>
        <dbReference type="ChEBI" id="CHEBI:15377"/>
        <dbReference type="ChEBI" id="CHEBI:15378"/>
        <dbReference type="ChEBI" id="CHEBI:29985"/>
        <dbReference type="ChEBI" id="CHEBI:30616"/>
        <dbReference type="ChEBI" id="CHEBI:33019"/>
        <dbReference type="ChEBI" id="CHEBI:57464"/>
        <dbReference type="ChEBI" id="CHEBI:58115"/>
        <dbReference type="ChEBI" id="CHEBI:58359"/>
        <dbReference type="ChEBI" id="CHEBI:456215"/>
        <dbReference type="EC" id="6.3.5.2"/>
    </reaction>
</comment>
<comment type="pathway">
    <text evidence="1">Purine metabolism; GMP biosynthesis; GMP from XMP (L-Gln route): step 1/1.</text>
</comment>
<comment type="subunit">
    <text evidence="1">Homodimer.</text>
</comment>
<name>GUAA_STRP2</name>
<accession>Q04JQ8</accession>